<dbReference type="EC" id="3.6.4.-" evidence="1"/>
<dbReference type="EMBL" id="AM942759">
    <property type="protein sequence ID" value="CAR42409.1"/>
    <property type="molecule type" value="Genomic_DNA"/>
</dbReference>
<dbReference type="RefSeq" id="WP_004242732.1">
    <property type="nucleotide sequence ID" value="NC_010554.1"/>
</dbReference>
<dbReference type="SMR" id="B4ETP8"/>
<dbReference type="EnsemblBacteria" id="CAR42409">
    <property type="protein sequence ID" value="CAR42409"/>
    <property type="gene ID" value="PMI1116"/>
</dbReference>
<dbReference type="GeneID" id="6802720"/>
<dbReference type="KEGG" id="pmr:PMI1116"/>
<dbReference type="eggNOG" id="COG2255">
    <property type="taxonomic scope" value="Bacteria"/>
</dbReference>
<dbReference type="HOGENOM" id="CLU_055599_1_0_6"/>
<dbReference type="Proteomes" id="UP000008319">
    <property type="component" value="Chromosome"/>
</dbReference>
<dbReference type="GO" id="GO:0005737">
    <property type="term" value="C:cytoplasm"/>
    <property type="evidence" value="ECO:0007669"/>
    <property type="project" value="UniProtKB-SubCell"/>
</dbReference>
<dbReference type="GO" id="GO:0048476">
    <property type="term" value="C:Holliday junction resolvase complex"/>
    <property type="evidence" value="ECO:0007669"/>
    <property type="project" value="UniProtKB-UniRule"/>
</dbReference>
<dbReference type="GO" id="GO:0005524">
    <property type="term" value="F:ATP binding"/>
    <property type="evidence" value="ECO:0007669"/>
    <property type="project" value="UniProtKB-UniRule"/>
</dbReference>
<dbReference type="GO" id="GO:0016887">
    <property type="term" value="F:ATP hydrolysis activity"/>
    <property type="evidence" value="ECO:0007669"/>
    <property type="project" value="InterPro"/>
</dbReference>
<dbReference type="GO" id="GO:0000400">
    <property type="term" value="F:four-way junction DNA binding"/>
    <property type="evidence" value="ECO:0007669"/>
    <property type="project" value="UniProtKB-UniRule"/>
</dbReference>
<dbReference type="GO" id="GO:0009378">
    <property type="term" value="F:four-way junction helicase activity"/>
    <property type="evidence" value="ECO:0007669"/>
    <property type="project" value="InterPro"/>
</dbReference>
<dbReference type="GO" id="GO:0006310">
    <property type="term" value="P:DNA recombination"/>
    <property type="evidence" value="ECO:0007669"/>
    <property type="project" value="UniProtKB-UniRule"/>
</dbReference>
<dbReference type="GO" id="GO:0006281">
    <property type="term" value="P:DNA repair"/>
    <property type="evidence" value="ECO:0007669"/>
    <property type="project" value="UniProtKB-UniRule"/>
</dbReference>
<dbReference type="CDD" id="cd00009">
    <property type="entry name" value="AAA"/>
    <property type="match status" value="1"/>
</dbReference>
<dbReference type="FunFam" id="1.10.10.10:FF:000086">
    <property type="entry name" value="Holliday junction ATP-dependent DNA helicase RuvB"/>
    <property type="match status" value="1"/>
</dbReference>
<dbReference type="FunFam" id="1.10.8.60:FF:000023">
    <property type="entry name" value="Holliday junction ATP-dependent DNA helicase RuvB"/>
    <property type="match status" value="1"/>
</dbReference>
<dbReference type="FunFam" id="3.40.50.300:FF:000073">
    <property type="entry name" value="Holliday junction ATP-dependent DNA helicase RuvB"/>
    <property type="match status" value="1"/>
</dbReference>
<dbReference type="Gene3D" id="1.10.8.60">
    <property type="match status" value="1"/>
</dbReference>
<dbReference type="Gene3D" id="3.40.50.300">
    <property type="entry name" value="P-loop containing nucleotide triphosphate hydrolases"/>
    <property type="match status" value="1"/>
</dbReference>
<dbReference type="Gene3D" id="1.10.10.10">
    <property type="entry name" value="Winged helix-like DNA-binding domain superfamily/Winged helix DNA-binding domain"/>
    <property type="match status" value="1"/>
</dbReference>
<dbReference type="HAMAP" id="MF_00016">
    <property type="entry name" value="DNA_HJ_migration_RuvB"/>
    <property type="match status" value="1"/>
</dbReference>
<dbReference type="InterPro" id="IPR003593">
    <property type="entry name" value="AAA+_ATPase"/>
</dbReference>
<dbReference type="InterPro" id="IPR041445">
    <property type="entry name" value="AAA_lid_4"/>
</dbReference>
<dbReference type="InterPro" id="IPR004605">
    <property type="entry name" value="DNA_helicase_Holl-junc_RuvB"/>
</dbReference>
<dbReference type="InterPro" id="IPR027417">
    <property type="entry name" value="P-loop_NTPase"/>
</dbReference>
<dbReference type="InterPro" id="IPR008824">
    <property type="entry name" value="RuvB-like_N"/>
</dbReference>
<dbReference type="InterPro" id="IPR008823">
    <property type="entry name" value="RuvB_C"/>
</dbReference>
<dbReference type="InterPro" id="IPR036388">
    <property type="entry name" value="WH-like_DNA-bd_sf"/>
</dbReference>
<dbReference type="InterPro" id="IPR036390">
    <property type="entry name" value="WH_DNA-bd_sf"/>
</dbReference>
<dbReference type="NCBIfam" id="NF000868">
    <property type="entry name" value="PRK00080.1"/>
    <property type="match status" value="1"/>
</dbReference>
<dbReference type="NCBIfam" id="TIGR00635">
    <property type="entry name" value="ruvB"/>
    <property type="match status" value="1"/>
</dbReference>
<dbReference type="PANTHER" id="PTHR42848">
    <property type="match status" value="1"/>
</dbReference>
<dbReference type="PANTHER" id="PTHR42848:SF1">
    <property type="entry name" value="HOLLIDAY JUNCTION BRANCH MIGRATION COMPLEX SUBUNIT RUVB"/>
    <property type="match status" value="1"/>
</dbReference>
<dbReference type="Pfam" id="PF17864">
    <property type="entry name" value="AAA_lid_4"/>
    <property type="match status" value="1"/>
</dbReference>
<dbReference type="Pfam" id="PF05491">
    <property type="entry name" value="RuvB_C"/>
    <property type="match status" value="1"/>
</dbReference>
<dbReference type="Pfam" id="PF05496">
    <property type="entry name" value="RuvB_N"/>
    <property type="match status" value="1"/>
</dbReference>
<dbReference type="SMART" id="SM00382">
    <property type="entry name" value="AAA"/>
    <property type="match status" value="1"/>
</dbReference>
<dbReference type="SUPFAM" id="SSF52540">
    <property type="entry name" value="P-loop containing nucleoside triphosphate hydrolases"/>
    <property type="match status" value="1"/>
</dbReference>
<dbReference type="SUPFAM" id="SSF46785">
    <property type="entry name" value="Winged helix' DNA-binding domain"/>
    <property type="match status" value="1"/>
</dbReference>
<keyword id="KW-0067">ATP-binding</keyword>
<keyword id="KW-0963">Cytoplasm</keyword>
<keyword id="KW-0227">DNA damage</keyword>
<keyword id="KW-0233">DNA recombination</keyword>
<keyword id="KW-0234">DNA repair</keyword>
<keyword id="KW-0238">DNA-binding</keyword>
<keyword id="KW-0378">Hydrolase</keyword>
<keyword id="KW-0547">Nucleotide-binding</keyword>
<keyword id="KW-1185">Reference proteome</keyword>
<protein>
    <recommendedName>
        <fullName evidence="1">Holliday junction branch migration complex subunit RuvB</fullName>
        <ecNumber evidence="1">3.6.4.-</ecNumber>
    </recommendedName>
</protein>
<gene>
    <name evidence="1" type="primary">ruvB</name>
    <name type="ordered locus">PMI1116</name>
</gene>
<feature type="chain" id="PRO_1000089664" description="Holliday junction branch migration complex subunit RuvB">
    <location>
        <begin position="1"/>
        <end position="336"/>
    </location>
</feature>
<feature type="region of interest" description="Large ATPase domain (RuvB-L)" evidence="1">
    <location>
        <begin position="4"/>
        <end position="185"/>
    </location>
</feature>
<feature type="region of interest" description="Small ATPAse domain (RuvB-S)" evidence="1">
    <location>
        <begin position="186"/>
        <end position="256"/>
    </location>
</feature>
<feature type="region of interest" description="Head domain (RuvB-H)" evidence="1">
    <location>
        <begin position="259"/>
        <end position="336"/>
    </location>
</feature>
<feature type="binding site" evidence="1">
    <location>
        <position position="24"/>
    </location>
    <ligand>
        <name>ATP</name>
        <dbReference type="ChEBI" id="CHEBI:30616"/>
    </ligand>
</feature>
<feature type="binding site" evidence="1">
    <location>
        <position position="25"/>
    </location>
    <ligand>
        <name>ATP</name>
        <dbReference type="ChEBI" id="CHEBI:30616"/>
    </ligand>
</feature>
<feature type="binding site" evidence="1">
    <location>
        <position position="66"/>
    </location>
    <ligand>
        <name>ATP</name>
        <dbReference type="ChEBI" id="CHEBI:30616"/>
    </ligand>
</feature>
<feature type="binding site" evidence="1">
    <location>
        <position position="69"/>
    </location>
    <ligand>
        <name>ATP</name>
        <dbReference type="ChEBI" id="CHEBI:30616"/>
    </ligand>
</feature>
<feature type="binding site" evidence="1">
    <location>
        <position position="70"/>
    </location>
    <ligand>
        <name>ATP</name>
        <dbReference type="ChEBI" id="CHEBI:30616"/>
    </ligand>
</feature>
<feature type="binding site" evidence="1">
    <location>
        <position position="70"/>
    </location>
    <ligand>
        <name>Mg(2+)</name>
        <dbReference type="ChEBI" id="CHEBI:18420"/>
    </ligand>
</feature>
<feature type="binding site" evidence="1">
    <location>
        <position position="71"/>
    </location>
    <ligand>
        <name>ATP</name>
        <dbReference type="ChEBI" id="CHEBI:30616"/>
    </ligand>
</feature>
<feature type="binding site" evidence="1">
    <location>
        <begin position="132"/>
        <end position="134"/>
    </location>
    <ligand>
        <name>ATP</name>
        <dbReference type="ChEBI" id="CHEBI:30616"/>
    </ligand>
</feature>
<feature type="binding site" evidence="1">
    <location>
        <position position="175"/>
    </location>
    <ligand>
        <name>ATP</name>
        <dbReference type="ChEBI" id="CHEBI:30616"/>
    </ligand>
</feature>
<feature type="binding site" evidence="1">
    <location>
        <position position="185"/>
    </location>
    <ligand>
        <name>ATP</name>
        <dbReference type="ChEBI" id="CHEBI:30616"/>
    </ligand>
</feature>
<feature type="binding site" evidence="1">
    <location>
        <position position="222"/>
    </location>
    <ligand>
        <name>ATP</name>
        <dbReference type="ChEBI" id="CHEBI:30616"/>
    </ligand>
</feature>
<feature type="binding site" evidence="1">
    <location>
        <position position="295"/>
    </location>
    <ligand>
        <name>DNA</name>
        <dbReference type="ChEBI" id="CHEBI:16991"/>
    </ligand>
</feature>
<feature type="binding site" evidence="1">
    <location>
        <position position="314"/>
    </location>
    <ligand>
        <name>DNA</name>
        <dbReference type="ChEBI" id="CHEBI:16991"/>
    </ligand>
</feature>
<feature type="binding site" evidence="1">
    <location>
        <position position="319"/>
    </location>
    <ligand>
        <name>DNA</name>
        <dbReference type="ChEBI" id="CHEBI:16991"/>
    </ligand>
</feature>
<organism>
    <name type="scientific">Proteus mirabilis (strain HI4320)</name>
    <dbReference type="NCBI Taxonomy" id="529507"/>
    <lineage>
        <taxon>Bacteria</taxon>
        <taxon>Pseudomonadati</taxon>
        <taxon>Pseudomonadota</taxon>
        <taxon>Gammaproteobacteria</taxon>
        <taxon>Enterobacterales</taxon>
        <taxon>Morganellaceae</taxon>
        <taxon>Proteus</taxon>
    </lineage>
</organism>
<accession>B4ETP8</accession>
<name>RUVB_PROMH</name>
<evidence type="ECO:0000255" key="1">
    <source>
        <dbReference type="HAMAP-Rule" id="MF_00016"/>
    </source>
</evidence>
<reference key="1">
    <citation type="journal article" date="2008" name="J. Bacteriol.">
        <title>Complete genome sequence of uropathogenic Proteus mirabilis, a master of both adherence and motility.</title>
        <authorList>
            <person name="Pearson M.M."/>
            <person name="Sebaihia M."/>
            <person name="Churcher C."/>
            <person name="Quail M.A."/>
            <person name="Seshasayee A.S."/>
            <person name="Luscombe N.M."/>
            <person name="Abdellah Z."/>
            <person name="Arrosmith C."/>
            <person name="Atkin B."/>
            <person name="Chillingworth T."/>
            <person name="Hauser H."/>
            <person name="Jagels K."/>
            <person name="Moule S."/>
            <person name="Mungall K."/>
            <person name="Norbertczak H."/>
            <person name="Rabbinowitsch E."/>
            <person name="Walker D."/>
            <person name="Whithead S."/>
            <person name="Thomson N.R."/>
            <person name="Rather P.N."/>
            <person name="Parkhill J."/>
            <person name="Mobley H.L.T."/>
        </authorList>
    </citation>
    <scope>NUCLEOTIDE SEQUENCE [LARGE SCALE GENOMIC DNA]</scope>
    <source>
        <strain>HI4320</strain>
    </source>
</reference>
<proteinExistence type="inferred from homology"/>
<comment type="function">
    <text evidence="1">The RuvA-RuvB-RuvC complex processes Holliday junction (HJ) DNA during genetic recombination and DNA repair, while the RuvA-RuvB complex plays an important role in the rescue of blocked DNA replication forks via replication fork reversal (RFR). RuvA specifically binds to HJ cruciform DNA, conferring on it an open structure. The RuvB hexamer acts as an ATP-dependent pump, pulling dsDNA into and through the RuvAB complex. RuvB forms 2 homohexamers on either side of HJ DNA bound by 1 or 2 RuvA tetramers; 4 subunits per hexamer contact DNA at a time. Coordinated motions by a converter formed by DNA-disengaged RuvB subunits stimulates ATP hydrolysis and nucleotide exchange. Immobilization of the converter enables RuvB to convert the ATP-contained energy into a lever motion, pulling 2 nucleotides of DNA out of the RuvA tetramer per ATP hydrolyzed, thus driving DNA branch migration. The RuvB motors rotate together with the DNA substrate, which together with the progressing nucleotide cycle form the mechanistic basis for DNA recombination by continuous HJ branch migration. Branch migration allows RuvC to scan DNA until it finds its consensus sequence, where it cleaves and resolves cruciform DNA.</text>
</comment>
<comment type="catalytic activity">
    <reaction evidence="1">
        <text>ATP + H2O = ADP + phosphate + H(+)</text>
        <dbReference type="Rhea" id="RHEA:13065"/>
        <dbReference type="ChEBI" id="CHEBI:15377"/>
        <dbReference type="ChEBI" id="CHEBI:15378"/>
        <dbReference type="ChEBI" id="CHEBI:30616"/>
        <dbReference type="ChEBI" id="CHEBI:43474"/>
        <dbReference type="ChEBI" id="CHEBI:456216"/>
    </reaction>
</comment>
<comment type="subunit">
    <text evidence="1">Homohexamer. Forms an RuvA(8)-RuvB(12)-Holliday junction (HJ) complex. HJ DNA is sandwiched between 2 RuvA tetramers; dsDNA enters through RuvA and exits via RuvB. An RuvB hexamer assembles on each DNA strand where it exits the tetramer. Each RuvB hexamer is contacted by two RuvA subunits (via domain III) on 2 adjacent RuvB subunits; this complex drives branch migration. In the full resolvosome a probable DNA-RuvA(4)-RuvB(12)-RuvC(2) complex forms which resolves the HJ.</text>
</comment>
<comment type="subcellular location">
    <subcellularLocation>
        <location evidence="1">Cytoplasm</location>
    </subcellularLocation>
</comment>
<comment type="domain">
    <text evidence="1">Has 3 domains, the large (RuvB-L) and small ATPase (RuvB-S) domains and the C-terminal head (RuvB-H) domain. The head domain binds DNA, while the ATPase domains jointly bind ATP, ADP or are empty depending on the state of the subunit in the translocation cycle. During a single DNA translocation step the structure of each domain remains the same, but their relative positions change.</text>
</comment>
<comment type="similarity">
    <text evidence="1">Belongs to the RuvB family.</text>
</comment>
<sequence>MIEADRLISADIQQPEEEIIDRAIRPKLLAEYVGQPQVREQMEIFIQAAKLRHDALDHLLIFGPPGLGKTTLANIIANEMGVNLRTTSGPVLEKAGDLAAMLTNLEPHDVLFIDEIHRLSPVVEEILYPAMEDYQLDIMIGEGPAARSIKIDLPPFTLVGATTRAGSLTSPLRDRFGIVQRLEFYNVDDLQHIVARSASFMGLEITAEGARQIAMRSRGTPRITNRLLRRVRDFAQVKGNGEIDEDIASKALDMLNVDAAGFDYLDRKLLFAIIDKFMGGPVGLDNLAAAIGEERETIEDVLEPYLIQQGFIQRTPRGRVATNHAYRHFNRIMEAP</sequence>